<sequence length="318" mass="34060">MTSAYDKLHSTLDVKAFGRVAVLYGGKSAEREVSLKSGAAVIDALTTAGVDVVAIDVGDDLLARLQSEEIDRAFIILHGRGGEDGSMQGLLECLGIPYTGSGILASALAMDKLRTKQVWQSLGIPTPRHAVLASESDCLQASTELGFPLIVKPAHEGSSIGMAKVNSAQELVAAWQDAAKYDSQVLVEQWIHGPEFTIAVLRGQVLPPIALGTPHVFYDYDAKYIANDTQYRIPCGLDSAKEQELIDLTARACDAIGIEGWGRLDVMQDEQGRFWLLEVNTAPGMTDHSLVPMAARAAGLDFQQLVLAILAESVATRG</sequence>
<keyword id="KW-0067">ATP-binding</keyword>
<keyword id="KW-0133">Cell shape</keyword>
<keyword id="KW-0961">Cell wall biogenesis/degradation</keyword>
<keyword id="KW-0963">Cytoplasm</keyword>
<keyword id="KW-0436">Ligase</keyword>
<keyword id="KW-0460">Magnesium</keyword>
<keyword id="KW-0464">Manganese</keyword>
<keyword id="KW-0479">Metal-binding</keyword>
<keyword id="KW-0547">Nucleotide-binding</keyword>
<keyword id="KW-0573">Peptidoglycan synthesis</keyword>
<dbReference type="EC" id="6.3.2.4" evidence="2"/>
<dbReference type="EMBL" id="CP000926">
    <property type="protein sequence ID" value="ABZ00397.1"/>
    <property type="molecule type" value="Genomic_DNA"/>
</dbReference>
<dbReference type="RefSeq" id="WP_012274057.1">
    <property type="nucleotide sequence ID" value="NC_010322.1"/>
</dbReference>
<dbReference type="SMR" id="B0KFS4"/>
<dbReference type="KEGG" id="ppg:PputGB1_4510"/>
<dbReference type="eggNOG" id="COG1181">
    <property type="taxonomic scope" value="Bacteria"/>
</dbReference>
<dbReference type="HOGENOM" id="CLU_039268_1_2_6"/>
<dbReference type="UniPathway" id="UPA00219"/>
<dbReference type="Proteomes" id="UP000002157">
    <property type="component" value="Chromosome"/>
</dbReference>
<dbReference type="GO" id="GO:0005829">
    <property type="term" value="C:cytosol"/>
    <property type="evidence" value="ECO:0007669"/>
    <property type="project" value="TreeGrafter"/>
</dbReference>
<dbReference type="GO" id="GO:0005524">
    <property type="term" value="F:ATP binding"/>
    <property type="evidence" value="ECO:0007669"/>
    <property type="project" value="UniProtKB-KW"/>
</dbReference>
<dbReference type="GO" id="GO:0008716">
    <property type="term" value="F:D-alanine-D-alanine ligase activity"/>
    <property type="evidence" value="ECO:0007669"/>
    <property type="project" value="UniProtKB-UniRule"/>
</dbReference>
<dbReference type="GO" id="GO:0046872">
    <property type="term" value="F:metal ion binding"/>
    <property type="evidence" value="ECO:0007669"/>
    <property type="project" value="UniProtKB-KW"/>
</dbReference>
<dbReference type="GO" id="GO:0071555">
    <property type="term" value="P:cell wall organization"/>
    <property type="evidence" value="ECO:0007669"/>
    <property type="project" value="UniProtKB-KW"/>
</dbReference>
<dbReference type="GO" id="GO:0009252">
    <property type="term" value="P:peptidoglycan biosynthetic process"/>
    <property type="evidence" value="ECO:0007669"/>
    <property type="project" value="UniProtKB-UniRule"/>
</dbReference>
<dbReference type="GO" id="GO:0008360">
    <property type="term" value="P:regulation of cell shape"/>
    <property type="evidence" value="ECO:0007669"/>
    <property type="project" value="UniProtKB-KW"/>
</dbReference>
<dbReference type="FunFam" id="3.30.1490.20:FF:000007">
    <property type="entry name" value="D-alanine--D-alanine ligase"/>
    <property type="match status" value="1"/>
</dbReference>
<dbReference type="FunFam" id="3.30.470.20:FF:000008">
    <property type="entry name" value="D-alanine--D-alanine ligase"/>
    <property type="match status" value="1"/>
</dbReference>
<dbReference type="FunFam" id="3.40.50.20:FF:000013">
    <property type="entry name" value="D-alanine--D-alanine ligase"/>
    <property type="match status" value="1"/>
</dbReference>
<dbReference type="Gene3D" id="3.40.50.20">
    <property type="match status" value="1"/>
</dbReference>
<dbReference type="Gene3D" id="3.30.1490.20">
    <property type="entry name" value="ATP-grasp fold, A domain"/>
    <property type="match status" value="1"/>
</dbReference>
<dbReference type="Gene3D" id="3.30.470.20">
    <property type="entry name" value="ATP-grasp fold, B domain"/>
    <property type="match status" value="1"/>
</dbReference>
<dbReference type="HAMAP" id="MF_00047">
    <property type="entry name" value="Dala_Dala_lig"/>
    <property type="match status" value="1"/>
</dbReference>
<dbReference type="InterPro" id="IPR011761">
    <property type="entry name" value="ATP-grasp"/>
</dbReference>
<dbReference type="InterPro" id="IPR013815">
    <property type="entry name" value="ATP_grasp_subdomain_1"/>
</dbReference>
<dbReference type="InterPro" id="IPR000291">
    <property type="entry name" value="D-Ala_lig_Van_CS"/>
</dbReference>
<dbReference type="InterPro" id="IPR005905">
    <property type="entry name" value="D_ala_D_ala"/>
</dbReference>
<dbReference type="InterPro" id="IPR011095">
    <property type="entry name" value="Dala_Dala_lig_C"/>
</dbReference>
<dbReference type="InterPro" id="IPR011127">
    <property type="entry name" value="Dala_Dala_lig_N"/>
</dbReference>
<dbReference type="InterPro" id="IPR016185">
    <property type="entry name" value="PreATP-grasp_dom_sf"/>
</dbReference>
<dbReference type="NCBIfam" id="TIGR01205">
    <property type="entry name" value="D_ala_D_alaTIGR"/>
    <property type="match status" value="1"/>
</dbReference>
<dbReference type="NCBIfam" id="NF002378">
    <property type="entry name" value="PRK01372.1"/>
    <property type="match status" value="1"/>
</dbReference>
<dbReference type="PANTHER" id="PTHR23132">
    <property type="entry name" value="D-ALANINE--D-ALANINE LIGASE"/>
    <property type="match status" value="1"/>
</dbReference>
<dbReference type="PANTHER" id="PTHR23132:SF23">
    <property type="entry name" value="D-ALANINE--D-ALANINE LIGASE B"/>
    <property type="match status" value="1"/>
</dbReference>
<dbReference type="Pfam" id="PF07478">
    <property type="entry name" value="Dala_Dala_lig_C"/>
    <property type="match status" value="1"/>
</dbReference>
<dbReference type="Pfam" id="PF01820">
    <property type="entry name" value="Dala_Dala_lig_N"/>
    <property type="match status" value="2"/>
</dbReference>
<dbReference type="PIRSF" id="PIRSF039102">
    <property type="entry name" value="Ddl/VanB"/>
    <property type="match status" value="1"/>
</dbReference>
<dbReference type="SUPFAM" id="SSF56059">
    <property type="entry name" value="Glutathione synthetase ATP-binding domain-like"/>
    <property type="match status" value="1"/>
</dbReference>
<dbReference type="SUPFAM" id="SSF52440">
    <property type="entry name" value="PreATP-grasp domain"/>
    <property type="match status" value="1"/>
</dbReference>
<dbReference type="PROSITE" id="PS50975">
    <property type="entry name" value="ATP_GRASP"/>
    <property type="match status" value="1"/>
</dbReference>
<dbReference type="PROSITE" id="PS00843">
    <property type="entry name" value="DALA_DALA_LIGASE_1"/>
    <property type="match status" value="1"/>
</dbReference>
<dbReference type="PROSITE" id="PS00844">
    <property type="entry name" value="DALA_DALA_LIGASE_2"/>
    <property type="match status" value="1"/>
</dbReference>
<proteinExistence type="inferred from homology"/>
<protein>
    <recommendedName>
        <fullName evidence="2">D-alanine--D-alanine ligase</fullName>
        <ecNumber evidence="2">6.3.2.4</ecNumber>
    </recommendedName>
    <alternativeName>
        <fullName evidence="2">D-Ala-D-Ala ligase</fullName>
    </alternativeName>
    <alternativeName>
        <fullName evidence="2">D-alanylalanine synthetase</fullName>
    </alternativeName>
</protein>
<comment type="function">
    <text evidence="2">Cell wall formation.</text>
</comment>
<comment type="catalytic activity">
    <reaction evidence="2">
        <text>2 D-alanine + ATP = D-alanyl-D-alanine + ADP + phosphate + H(+)</text>
        <dbReference type="Rhea" id="RHEA:11224"/>
        <dbReference type="ChEBI" id="CHEBI:15378"/>
        <dbReference type="ChEBI" id="CHEBI:30616"/>
        <dbReference type="ChEBI" id="CHEBI:43474"/>
        <dbReference type="ChEBI" id="CHEBI:57416"/>
        <dbReference type="ChEBI" id="CHEBI:57822"/>
        <dbReference type="ChEBI" id="CHEBI:456216"/>
        <dbReference type="EC" id="6.3.2.4"/>
    </reaction>
</comment>
<comment type="cofactor">
    <cofactor evidence="1">
        <name>Mg(2+)</name>
        <dbReference type="ChEBI" id="CHEBI:18420"/>
    </cofactor>
    <cofactor evidence="1">
        <name>Mn(2+)</name>
        <dbReference type="ChEBI" id="CHEBI:29035"/>
    </cofactor>
    <text evidence="1">Binds 2 magnesium or manganese ions per subunit.</text>
</comment>
<comment type="pathway">
    <text evidence="2">Cell wall biogenesis; peptidoglycan biosynthesis.</text>
</comment>
<comment type="subcellular location">
    <subcellularLocation>
        <location evidence="2">Cytoplasm</location>
    </subcellularLocation>
</comment>
<comment type="similarity">
    <text evidence="2">Belongs to the D-alanine--D-alanine ligase family.</text>
</comment>
<name>DDL_PSEPG</name>
<evidence type="ECO:0000250" key="1"/>
<evidence type="ECO:0000255" key="2">
    <source>
        <dbReference type="HAMAP-Rule" id="MF_00047"/>
    </source>
</evidence>
<gene>
    <name evidence="2" type="primary">ddl</name>
    <name type="ordered locus">PputGB1_4510</name>
</gene>
<reference key="1">
    <citation type="submission" date="2008-01" db="EMBL/GenBank/DDBJ databases">
        <title>Complete sequence of Pseudomonas putida GB-1.</title>
        <authorList>
            <consortium name="US DOE Joint Genome Institute"/>
            <person name="Copeland A."/>
            <person name="Lucas S."/>
            <person name="Lapidus A."/>
            <person name="Barry K."/>
            <person name="Glavina del Rio T."/>
            <person name="Dalin E."/>
            <person name="Tice H."/>
            <person name="Pitluck S."/>
            <person name="Bruce D."/>
            <person name="Goodwin L."/>
            <person name="Chertkov O."/>
            <person name="Brettin T."/>
            <person name="Detter J.C."/>
            <person name="Han C."/>
            <person name="Kuske C.R."/>
            <person name="Schmutz J."/>
            <person name="Larimer F."/>
            <person name="Land M."/>
            <person name="Hauser L."/>
            <person name="Kyrpides N."/>
            <person name="Kim E."/>
            <person name="McCarthy J.K."/>
            <person name="Richardson P."/>
        </authorList>
    </citation>
    <scope>NUCLEOTIDE SEQUENCE [LARGE SCALE GENOMIC DNA]</scope>
    <source>
        <strain>GB-1</strain>
    </source>
</reference>
<feature type="chain" id="PRO_1000074780" description="D-alanine--D-alanine ligase">
    <location>
        <begin position="1"/>
        <end position="318"/>
    </location>
</feature>
<feature type="domain" description="ATP-grasp" evidence="2">
    <location>
        <begin position="116"/>
        <end position="311"/>
    </location>
</feature>
<feature type="binding site" evidence="2">
    <location>
        <begin position="142"/>
        <end position="197"/>
    </location>
    <ligand>
        <name>ATP</name>
        <dbReference type="ChEBI" id="CHEBI:30616"/>
    </ligand>
</feature>
<feature type="binding site" evidence="2">
    <location>
        <position position="265"/>
    </location>
    <ligand>
        <name>Mg(2+)</name>
        <dbReference type="ChEBI" id="CHEBI:18420"/>
        <label>1</label>
    </ligand>
</feature>
<feature type="binding site" evidence="2">
    <location>
        <position position="278"/>
    </location>
    <ligand>
        <name>Mg(2+)</name>
        <dbReference type="ChEBI" id="CHEBI:18420"/>
        <label>1</label>
    </ligand>
</feature>
<feature type="binding site" evidence="2">
    <location>
        <position position="278"/>
    </location>
    <ligand>
        <name>Mg(2+)</name>
        <dbReference type="ChEBI" id="CHEBI:18420"/>
        <label>2</label>
    </ligand>
</feature>
<feature type="binding site" evidence="2">
    <location>
        <position position="280"/>
    </location>
    <ligand>
        <name>Mg(2+)</name>
        <dbReference type="ChEBI" id="CHEBI:18420"/>
        <label>2</label>
    </ligand>
</feature>
<organism>
    <name type="scientific">Pseudomonas putida (strain GB-1)</name>
    <dbReference type="NCBI Taxonomy" id="76869"/>
    <lineage>
        <taxon>Bacteria</taxon>
        <taxon>Pseudomonadati</taxon>
        <taxon>Pseudomonadota</taxon>
        <taxon>Gammaproteobacteria</taxon>
        <taxon>Pseudomonadales</taxon>
        <taxon>Pseudomonadaceae</taxon>
        <taxon>Pseudomonas</taxon>
    </lineage>
</organism>
<accession>B0KFS4</accession>